<reference key="1">
    <citation type="submission" date="2007-03" db="EMBL/GenBank/DDBJ databases">
        <title>Sequencing analysis of Lepidium virginicum JO26 chloroplast DNA.</title>
        <authorList>
            <person name="Hosouchi T."/>
            <person name="Tsuruoka H."/>
            <person name="Kotani H."/>
        </authorList>
    </citation>
    <scope>NUCLEOTIDE SEQUENCE [LARGE SCALE GENOMIC DNA]</scope>
</reference>
<comment type="subunit">
    <text evidence="1">Part of the 50S ribosomal subunit.</text>
</comment>
<comment type="subcellular location">
    <subcellularLocation>
        <location>Plastid</location>
        <location>Chloroplast</location>
    </subcellularLocation>
</comment>
<comment type="similarity">
    <text evidence="1">Belongs to the universal ribosomal protein uL16 family.</text>
</comment>
<sequence>MLSPKRTRFRKQHRGRLKGISSRGNRICFGRYALQTLEPAWITSRQIEAGRRAMSRNVRRGGKIWVRIFPDKPVTVRPAETRMGSGKGSPEYWVAVVKPGKILYEMGGVPENIARKAISIAASKMPIKTQFIISE</sequence>
<accession>A4QLE3</accession>
<dbReference type="EMBL" id="AP009374">
    <property type="protein sequence ID" value="BAF50498.1"/>
    <property type="molecule type" value="Genomic_DNA"/>
</dbReference>
<dbReference type="RefSeq" id="YP_001123674.1">
    <property type="nucleotide sequence ID" value="NC_009273.1"/>
</dbReference>
<dbReference type="SMR" id="A4QLE3"/>
<dbReference type="GeneID" id="4962075"/>
<dbReference type="GO" id="GO:0009507">
    <property type="term" value="C:chloroplast"/>
    <property type="evidence" value="ECO:0007669"/>
    <property type="project" value="UniProtKB-SubCell"/>
</dbReference>
<dbReference type="GO" id="GO:0005762">
    <property type="term" value="C:mitochondrial large ribosomal subunit"/>
    <property type="evidence" value="ECO:0007669"/>
    <property type="project" value="TreeGrafter"/>
</dbReference>
<dbReference type="GO" id="GO:0019843">
    <property type="term" value="F:rRNA binding"/>
    <property type="evidence" value="ECO:0007669"/>
    <property type="project" value="InterPro"/>
</dbReference>
<dbReference type="GO" id="GO:0003735">
    <property type="term" value="F:structural constituent of ribosome"/>
    <property type="evidence" value="ECO:0007669"/>
    <property type="project" value="InterPro"/>
</dbReference>
<dbReference type="GO" id="GO:0032543">
    <property type="term" value="P:mitochondrial translation"/>
    <property type="evidence" value="ECO:0007669"/>
    <property type="project" value="TreeGrafter"/>
</dbReference>
<dbReference type="CDD" id="cd01433">
    <property type="entry name" value="Ribosomal_L16_L10e"/>
    <property type="match status" value="1"/>
</dbReference>
<dbReference type="FunFam" id="3.90.1170.10:FF:000001">
    <property type="entry name" value="50S ribosomal protein L16"/>
    <property type="match status" value="1"/>
</dbReference>
<dbReference type="Gene3D" id="3.90.1170.10">
    <property type="entry name" value="Ribosomal protein L10e/L16"/>
    <property type="match status" value="1"/>
</dbReference>
<dbReference type="HAMAP" id="MF_01342">
    <property type="entry name" value="Ribosomal_uL16"/>
    <property type="match status" value="1"/>
</dbReference>
<dbReference type="InterPro" id="IPR047873">
    <property type="entry name" value="Ribosomal_uL16"/>
</dbReference>
<dbReference type="InterPro" id="IPR000114">
    <property type="entry name" value="Ribosomal_uL16_bact-type"/>
</dbReference>
<dbReference type="InterPro" id="IPR020798">
    <property type="entry name" value="Ribosomal_uL16_CS"/>
</dbReference>
<dbReference type="InterPro" id="IPR016180">
    <property type="entry name" value="Ribosomal_uL16_dom"/>
</dbReference>
<dbReference type="InterPro" id="IPR036920">
    <property type="entry name" value="Ribosomal_uL16_sf"/>
</dbReference>
<dbReference type="NCBIfam" id="TIGR01164">
    <property type="entry name" value="rplP_bact"/>
    <property type="match status" value="1"/>
</dbReference>
<dbReference type="PANTHER" id="PTHR12220">
    <property type="entry name" value="50S/60S RIBOSOMAL PROTEIN L16"/>
    <property type="match status" value="1"/>
</dbReference>
<dbReference type="PANTHER" id="PTHR12220:SF13">
    <property type="entry name" value="LARGE RIBOSOMAL SUBUNIT PROTEIN UL16M"/>
    <property type="match status" value="1"/>
</dbReference>
<dbReference type="Pfam" id="PF00252">
    <property type="entry name" value="Ribosomal_L16"/>
    <property type="match status" value="1"/>
</dbReference>
<dbReference type="PRINTS" id="PR00060">
    <property type="entry name" value="RIBOSOMALL16"/>
</dbReference>
<dbReference type="SUPFAM" id="SSF54686">
    <property type="entry name" value="Ribosomal protein L16p/L10e"/>
    <property type="match status" value="1"/>
</dbReference>
<dbReference type="PROSITE" id="PS00586">
    <property type="entry name" value="RIBOSOMAL_L16_1"/>
    <property type="match status" value="1"/>
</dbReference>
<dbReference type="PROSITE" id="PS00701">
    <property type="entry name" value="RIBOSOMAL_L16_2"/>
    <property type="match status" value="1"/>
</dbReference>
<geneLocation type="chloroplast"/>
<feature type="chain" id="PRO_0000354641" description="Large ribosomal subunit protein uL16c">
    <location>
        <begin position="1"/>
        <end position="135"/>
    </location>
</feature>
<evidence type="ECO:0000255" key="1">
    <source>
        <dbReference type="HAMAP-Rule" id="MF_01342"/>
    </source>
</evidence>
<evidence type="ECO:0000305" key="2"/>
<gene>
    <name evidence="1" type="primary">rpl16</name>
</gene>
<keyword id="KW-0150">Chloroplast</keyword>
<keyword id="KW-0934">Plastid</keyword>
<keyword id="KW-0687">Ribonucleoprotein</keyword>
<keyword id="KW-0689">Ribosomal protein</keyword>
<name>RK16_LEPVR</name>
<proteinExistence type="inferred from homology"/>
<organism>
    <name type="scientific">Lepidium virginicum</name>
    <name type="common">Virginia pepperweed</name>
    <dbReference type="NCBI Taxonomy" id="59292"/>
    <lineage>
        <taxon>Eukaryota</taxon>
        <taxon>Viridiplantae</taxon>
        <taxon>Streptophyta</taxon>
        <taxon>Embryophyta</taxon>
        <taxon>Tracheophyta</taxon>
        <taxon>Spermatophyta</taxon>
        <taxon>Magnoliopsida</taxon>
        <taxon>eudicotyledons</taxon>
        <taxon>Gunneridae</taxon>
        <taxon>Pentapetalae</taxon>
        <taxon>rosids</taxon>
        <taxon>malvids</taxon>
        <taxon>Brassicales</taxon>
        <taxon>Brassicaceae</taxon>
        <taxon>Lepidieae</taxon>
        <taxon>Lepidium</taxon>
    </lineage>
</organism>
<protein>
    <recommendedName>
        <fullName evidence="1">Large ribosomal subunit protein uL16c</fullName>
    </recommendedName>
    <alternativeName>
        <fullName evidence="2">50S ribosomal protein L16, chloroplastic</fullName>
    </alternativeName>
</protein>